<organism>
    <name type="scientific">Oncorhynchus keta</name>
    <name type="common">Chum salmon</name>
    <name type="synonym">Salmo keta</name>
    <dbReference type="NCBI Taxonomy" id="8018"/>
    <lineage>
        <taxon>Eukaryota</taxon>
        <taxon>Metazoa</taxon>
        <taxon>Chordata</taxon>
        <taxon>Craniata</taxon>
        <taxon>Vertebrata</taxon>
        <taxon>Euteleostomi</taxon>
        <taxon>Actinopterygii</taxon>
        <taxon>Neopterygii</taxon>
        <taxon>Teleostei</taxon>
        <taxon>Protacanthopterygii</taxon>
        <taxon>Salmoniformes</taxon>
        <taxon>Salmonidae</taxon>
        <taxon>Salmoninae</taxon>
        <taxon>Oncorhynchus</taxon>
    </lineage>
</organism>
<reference key="1">
    <citation type="journal article" date="1989" name="Nucleic Acids Res.">
        <title>Sequence of the salmon (Oncorhynchus keta) preproinsulin gene.</title>
        <authorList>
            <person name="Koval A.P."/>
            <person name="Petrenko A.I."/>
            <person name="Kavsan V.M."/>
        </authorList>
    </citation>
    <scope>NUCLEOTIDE SEQUENCE [GENOMIC DNA]</scope>
    <source>
        <tissue>Sperm</tissue>
    </source>
</reference>
<reference key="2">
    <citation type="journal article" date="1983" name="Dokl. Biochem.">
        <title>Nucleotide sequence of cloned insulin cDNA of Oncorhyncus keta.</title>
        <authorList>
            <person name="Sorokin A.V."/>
            <person name="Skoblov Y.S."/>
            <person name="Mironov A.A."/>
            <person name="Zlochevskii M.L."/>
            <person name="Dem'Yanova N.G."/>
            <person name="Rebentish B.A."/>
            <person name="Kozlov Y.I."/>
            <person name="Kavsan V.M."/>
            <person name="Sova V.V."/>
            <person name="Debabov V.G."/>
        </authorList>
    </citation>
    <scope>NUCLEOTIDE SEQUENCE</scope>
</reference>
<reference key="3">
    <citation type="journal article" date="1982" name="Gene">
        <title>Nucleotide sequence analysis of the cloned salmon preproinsulin cDNA.</title>
        <authorList>
            <person name="Sorokin A.V."/>
            <person name="Petrenko A.I."/>
            <person name="Kavsan V.M."/>
            <person name="Kozlov Y.I."/>
            <person name="Debabov V.G."/>
            <person name="Zlochevskii M.L."/>
        </authorList>
    </citation>
    <scope>NUCLEOTIDE SEQUENCE [MRNA]</scope>
</reference>
<reference key="4">
    <citation type="journal article" date="1981" name="Dokl. Biochem.">
        <title>Cloning of the insulin gene of a fish (Oncorhynchus keta) in Escherichia coli.</title>
        <authorList>
            <person name="Dem'Yanova N.G."/>
            <person name="Zlochevskii M.L."/>
            <person name="Kavsan V.M."/>
            <person name="Kozlov Y.I."/>
            <person name="Petrenko A.I."/>
            <person name="Polyakova N.E."/>
            <person name="Prokopenko I.V."/>
            <person name="Rebentish B.A."/>
            <person name="Ryndich A.V."/>
            <person name="Skoblov Y.S."/>
            <person name="Sova V.V."/>
            <person name="Yurin V.L."/>
            <person name="Yankovskii N.K."/>
            <person name="Debabov V.G."/>
        </authorList>
        <dbReference type="AGRICOLA" id="IND81114320"/>
    </citation>
    <scope>NUCLEOTIDE SEQUENCE OF 26-51</scope>
</reference>
<reference key="5">
    <citation type="journal article" date="1987" name="Zh. Evol. Biokhim. Fiziol.">
        <title>Amino acid sequence of the insulin of the dog salmon Oncorhynchus keta.</title>
        <authorList>
            <person name="Rusakov Y.I."/>
            <person name="Karasev V.S."/>
            <person name="Pertseva M.N."/>
            <person name="Pankov Y.A."/>
        </authorList>
    </citation>
    <scope>PROTEIN SEQUENCE OF 23-50 AND 85-105</scope>
</reference>
<keyword id="KW-0119">Carbohydrate metabolism</keyword>
<keyword id="KW-0165">Cleavage on pair of basic residues</keyword>
<keyword id="KW-0903">Direct protein sequencing</keyword>
<keyword id="KW-1015">Disulfide bond</keyword>
<keyword id="KW-0313">Glucose metabolism</keyword>
<keyword id="KW-0372">Hormone</keyword>
<keyword id="KW-0964">Secreted</keyword>
<keyword id="KW-0732">Signal</keyword>
<feature type="signal peptide" evidence="1">
    <location>
        <begin position="1"/>
        <end position="22"/>
    </location>
</feature>
<feature type="peptide" id="PRO_0000015858" description="Insulin B chain">
    <location>
        <begin position="23"/>
        <end position="50"/>
    </location>
</feature>
<feature type="propeptide" id="PRO_0000015859" description="C peptide">
    <location>
        <begin position="53"/>
        <end position="82"/>
    </location>
</feature>
<feature type="peptide" id="PRO_0000015860" description="Insulin A chain" evidence="2">
    <location>
        <begin position="85"/>
        <end position="105"/>
    </location>
</feature>
<feature type="disulfide bond" description="Interchain (between B and A chains)">
    <location>
        <begin position="29"/>
        <end position="91"/>
    </location>
</feature>
<feature type="disulfide bond" description="Interchain (between B and A chains)">
    <location>
        <begin position="41"/>
        <end position="104"/>
    </location>
</feature>
<feature type="disulfide bond">
    <location>
        <begin position="90"/>
        <end position="95"/>
    </location>
</feature>
<feature type="sequence conflict" description="In Ref. 4." evidence="3" ref="4">
    <location>
        <position position="27"/>
    </location>
</feature>
<feature type="sequence conflict" description="In Ref. 5; AA sequence." evidence="3" ref="5">
    <original>T</original>
    <variation>N</variation>
    <location>
        <position position="49"/>
    </location>
</feature>
<protein>
    <recommendedName>
        <fullName>Insulin</fullName>
    </recommendedName>
    <component>
        <recommendedName>
            <fullName>Insulin B chain</fullName>
        </recommendedName>
    </component>
    <component>
        <recommendedName>
            <fullName>Insulin A chain</fullName>
        </recommendedName>
    </component>
</protein>
<name>INS_ONCKE</name>
<evidence type="ECO:0000269" key="1">
    <source>
    </source>
</evidence>
<evidence type="ECO:0000269" key="2">
    <source>
    </source>
</evidence>
<evidence type="ECO:0000305" key="3"/>
<comment type="function">
    <text>Insulin decreases blood glucose concentration. It increases cell permeability to monosaccharides, amino acids and fatty acids. It accelerates glycolysis, the pentose phosphate cycle, and glycogen synthesis in liver.</text>
</comment>
<comment type="subunit">
    <text>Heterodimer of a B chain and an A chain linked by two disulfide bonds.</text>
</comment>
<comment type="subcellular location">
    <subcellularLocation>
        <location>Secreted</location>
    </subcellularLocation>
</comment>
<comment type="similarity">
    <text evidence="3">Belongs to the insulin family.</text>
</comment>
<accession>P04667</accession>
<accession>Q91477</accession>
<accession>Q91478</accession>
<accession>Q91479</accession>
<proteinExistence type="evidence at protein level"/>
<dbReference type="EMBL" id="X00148">
    <property type="protein sequence ID" value="CAA24983.1"/>
    <property type="status" value="ALT_SEQ"/>
    <property type="molecule type" value="mRNA"/>
</dbReference>
<dbReference type="EMBL" id="J00936">
    <property type="protein sequence ID" value="AAA49414.1"/>
    <property type="status" value="ALT_SEQ"/>
    <property type="molecule type" value="mRNA"/>
</dbReference>
<dbReference type="EMBL" id="K01655">
    <property type="protein sequence ID" value="AAA49417.1"/>
    <property type="molecule type" value="mRNA"/>
</dbReference>
<dbReference type="EMBL" id="X13559">
    <property type="protein sequence ID" value="CAA31910.1"/>
    <property type="molecule type" value="Genomic_DNA"/>
</dbReference>
<dbReference type="PIR" id="S02722">
    <property type="entry name" value="IPON"/>
</dbReference>
<dbReference type="SMR" id="P04667"/>
<dbReference type="OrthoDB" id="10019596at2759"/>
<dbReference type="GO" id="GO:0005615">
    <property type="term" value="C:extracellular space"/>
    <property type="evidence" value="ECO:0007669"/>
    <property type="project" value="TreeGrafter"/>
</dbReference>
<dbReference type="GO" id="GO:0005179">
    <property type="term" value="F:hormone activity"/>
    <property type="evidence" value="ECO:0007669"/>
    <property type="project" value="UniProtKB-KW"/>
</dbReference>
<dbReference type="GO" id="GO:0006006">
    <property type="term" value="P:glucose metabolic process"/>
    <property type="evidence" value="ECO:0007669"/>
    <property type="project" value="UniProtKB-KW"/>
</dbReference>
<dbReference type="CDD" id="cd04367">
    <property type="entry name" value="IlGF_insulin_like"/>
    <property type="match status" value="1"/>
</dbReference>
<dbReference type="FunFam" id="1.10.100.10:FF:000003">
    <property type="entry name" value="Insulin"/>
    <property type="match status" value="1"/>
</dbReference>
<dbReference type="Gene3D" id="1.10.100.10">
    <property type="entry name" value="Insulin-like"/>
    <property type="match status" value="1"/>
</dbReference>
<dbReference type="InterPro" id="IPR004825">
    <property type="entry name" value="Insulin"/>
</dbReference>
<dbReference type="InterPro" id="IPR016179">
    <property type="entry name" value="Insulin-like"/>
</dbReference>
<dbReference type="InterPro" id="IPR036438">
    <property type="entry name" value="Insulin-like_sf"/>
</dbReference>
<dbReference type="InterPro" id="IPR022353">
    <property type="entry name" value="Insulin_CS"/>
</dbReference>
<dbReference type="InterPro" id="IPR022352">
    <property type="entry name" value="Insulin_family"/>
</dbReference>
<dbReference type="PANTHER" id="PTHR11454:SF9">
    <property type="entry name" value="INSULIN"/>
    <property type="match status" value="1"/>
</dbReference>
<dbReference type="PANTHER" id="PTHR11454">
    <property type="entry name" value="INSULIN/INSULIN GROWTH FACTOR"/>
    <property type="match status" value="1"/>
</dbReference>
<dbReference type="Pfam" id="PF00049">
    <property type="entry name" value="Insulin"/>
    <property type="match status" value="1"/>
</dbReference>
<dbReference type="PRINTS" id="PR00277">
    <property type="entry name" value="INSULIN"/>
</dbReference>
<dbReference type="PRINTS" id="PR00276">
    <property type="entry name" value="INSULINFAMLY"/>
</dbReference>
<dbReference type="SMART" id="SM00078">
    <property type="entry name" value="IlGF"/>
    <property type="match status" value="1"/>
</dbReference>
<dbReference type="SUPFAM" id="SSF56994">
    <property type="entry name" value="Insulin-like"/>
    <property type="match status" value="1"/>
</dbReference>
<dbReference type="PROSITE" id="PS00262">
    <property type="entry name" value="INSULIN"/>
    <property type="match status" value="1"/>
</dbReference>
<sequence length="105" mass="11714">MAFWLQAASLLVLLALSPGVDAAAAQHLCGSHLVDALYLVCGEKGFFYTPKRDVDPLIGFLSPKSAKENEEYPFKDQTEMMVKRGIVEQCCHKPCNIFDLQNYCN</sequence>
<gene>
    <name type="primary">ins</name>
</gene>